<reference key="1">
    <citation type="journal article" date="2001" name="Plant Cell Physiol.">
        <title>Identification of plant cytokinin biosynthetic enzymes as dimethylallyl diphosphate:ATP/ADP isopentenyltransferases.</title>
        <authorList>
            <person name="Kakimoto T."/>
        </authorList>
    </citation>
    <scope>NUCLEOTIDE SEQUENCE [MRNA]</scope>
    <scope>GENE FAMILY</scope>
    <source>
        <strain>cv. Wassilewskija</strain>
    </source>
</reference>
<reference key="2">
    <citation type="journal article" date="2001" name="J. Biol. Chem.">
        <title>Identification of genes encoding adenylate isopentenyltransferase, a cytokinin biosynthesis enzyme, in Arabidopsis thaliana.</title>
        <authorList>
            <person name="Takei K."/>
            <person name="Sakakibara H."/>
            <person name="Sugiyama T."/>
        </authorList>
    </citation>
    <scope>NUCLEOTIDE SEQUENCE [MRNA]</scope>
    <scope>CATALYTIC ACTIVITY</scope>
    <scope>BIOPHYSICOCHEMICAL PROPERTIES</scope>
    <scope>GENE FAMILY</scope>
    <source>
        <strain>cv. Columbia</strain>
    </source>
</reference>
<reference key="3">
    <citation type="journal article" date="2000" name="Nature">
        <title>Sequence and analysis of chromosome 1 of the plant Arabidopsis thaliana.</title>
        <authorList>
            <person name="Theologis A."/>
            <person name="Ecker J.R."/>
            <person name="Palm C.J."/>
            <person name="Federspiel N.A."/>
            <person name="Kaul S."/>
            <person name="White O."/>
            <person name="Alonso J."/>
            <person name="Altafi H."/>
            <person name="Araujo R."/>
            <person name="Bowman C.L."/>
            <person name="Brooks S.Y."/>
            <person name="Buehler E."/>
            <person name="Chan A."/>
            <person name="Chao Q."/>
            <person name="Chen H."/>
            <person name="Cheuk R.F."/>
            <person name="Chin C.W."/>
            <person name="Chung M.K."/>
            <person name="Conn L."/>
            <person name="Conway A.B."/>
            <person name="Conway A.R."/>
            <person name="Creasy T.H."/>
            <person name="Dewar K."/>
            <person name="Dunn P."/>
            <person name="Etgu P."/>
            <person name="Feldblyum T.V."/>
            <person name="Feng J.-D."/>
            <person name="Fong B."/>
            <person name="Fujii C.Y."/>
            <person name="Gill J.E."/>
            <person name="Goldsmith A.D."/>
            <person name="Haas B."/>
            <person name="Hansen N.F."/>
            <person name="Hughes B."/>
            <person name="Huizar L."/>
            <person name="Hunter J.L."/>
            <person name="Jenkins J."/>
            <person name="Johnson-Hopson C."/>
            <person name="Khan S."/>
            <person name="Khaykin E."/>
            <person name="Kim C.J."/>
            <person name="Koo H.L."/>
            <person name="Kremenetskaia I."/>
            <person name="Kurtz D.B."/>
            <person name="Kwan A."/>
            <person name="Lam B."/>
            <person name="Langin-Hooper S."/>
            <person name="Lee A."/>
            <person name="Lee J.M."/>
            <person name="Lenz C.A."/>
            <person name="Li J.H."/>
            <person name="Li Y.-P."/>
            <person name="Lin X."/>
            <person name="Liu S.X."/>
            <person name="Liu Z.A."/>
            <person name="Luros J.S."/>
            <person name="Maiti R."/>
            <person name="Marziali A."/>
            <person name="Militscher J."/>
            <person name="Miranda M."/>
            <person name="Nguyen M."/>
            <person name="Nierman W.C."/>
            <person name="Osborne B.I."/>
            <person name="Pai G."/>
            <person name="Peterson J."/>
            <person name="Pham P.K."/>
            <person name="Rizzo M."/>
            <person name="Rooney T."/>
            <person name="Rowley D."/>
            <person name="Sakano H."/>
            <person name="Salzberg S.L."/>
            <person name="Schwartz J.R."/>
            <person name="Shinn P."/>
            <person name="Southwick A.M."/>
            <person name="Sun H."/>
            <person name="Tallon L.J."/>
            <person name="Tambunga G."/>
            <person name="Toriumi M.J."/>
            <person name="Town C.D."/>
            <person name="Utterback T."/>
            <person name="Van Aken S."/>
            <person name="Vaysberg M."/>
            <person name="Vysotskaia V.S."/>
            <person name="Walker M."/>
            <person name="Wu D."/>
            <person name="Yu G."/>
            <person name="Fraser C.M."/>
            <person name="Venter J.C."/>
            <person name="Davis R.W."/>
        </authorList>
    </citation>
    <scope>NUCLEOTIDE SEQUENCE [LARGE SCALE GENOMIC DNA]</scope>
    <source>
        <strain>cv. Columbia</strain>
    </source>
</reference>
<reference key="4">
    <citation type="journal article" date="2017" name="Plant J.">
        <title>Araport11: a complete reannotation of the Arabidopsis thaliana reference genome.</title>
        <authorList>
            <person name="Cheng C.Y."/>
            <person name="Krishnakumar V."/>
            <person name="Chan A.P."/>
            <person name="Thibaud-Nissen F."/>
            <person name="Schobel S."/>
            <person name="Town C.D."/>
        </authorList>
    </citation>
    <scope>GENOME REANNOTATION</scope>
    <source>
        <strain>cv. Columbia</strain>
    </source>
</reference>
<reference key="5">
    <citation type="journal article" date="2004" name="J. Biol. Chem.">
        <title>Distinct isoprenoid origins of cis- and trans-zeatin biosyntheses in Arabidopsis.</title>
        <authorList>
            <person name="Kasahara H."/>
            <person name="Takei K."/>
            <person name="Ueda N."/>
            <person name="Hishiyama S."/>
            <person name="Yamaya T."/>
            <person name="Kamiya Y."/>
            <person name="Yamaguchi S."/>
            <person name="Sakakibara H."/>
        </authorList>
    </citation>
    <scope>SUBCELLULAR LOCATION</scope>
</reference>
<reference key="6">
    <citation type="journal article" date="2004" name="Plant Cell Physiol.">
        <title>AtIPT3 is a key determinant of nitrate-dependent cytokinin biosynthesis in Arabidopsis.</title>
        <authorList>
            <person name="Takei K."/>
            <person name="Ueda N."/>
            <person name="Aoki K."/>
            <person name="Kuromori T."/>
            <person name="Hirayama T."/>
            <person name="Shinozaki K."/>
            <person name="Yamaya T."/>
            <person name="Sakakibara H."/>
        </authorList>
    </citation>
    <scope>TISSUE SPECIFICITY</scope>
</reference>
<reference key="7">
    <citation type="journal article" date="2004" name="Plant J.">
        <title>Expression of cytokinin biosynthetic isopentenyltransferase genes in Arabidopsis: tissue specificity and regulation by auxin, cytokinin, and nitrate.</title>
        <authorList>
            <person name="Miyawaki K."/>
            <person name="Matsumoto-Kitano M."/>
            <person name="Kakimoto T."/>
        </authorList>
    </citation>
    <scope>TISSUE SPECIFICITY</scope>
    <scope>INDUCTION</scope>
</reference>
<reference key="8">
    <citation type="journal article" date="2005" name="Proc. Natl. Acad. Sci. U.S.A.">
        <title>Agrobacterium tumefaciens increases cytokinin production in plastids by modifying the biosynthetic pathway in the host plant.</title>
        <authorList>
            <person name="Sakakibara H."/>
            <person name="Kasahara H."/>
            <person name="Ueda N."/>
            <person name="Kojima M."/>
            <person name="Takei K."/>
            <person name="Hishiyama S."/>
            <person name="Asami T."/>
            <person name="Okada K."/>
            <person name="Kamiya Y."/>
            <person name="Yamaya T."/>
            <person name="Yamaguchi S."/>
        </authorList>
    </citation>
    <scope>BIOPHYSICOCHEMICAL PROPERTIES</scope>
    <scope>CATALYTIC ACTIVITY</scope>
</reference>
<reference key="9">
    <citation type="journal article" date="2006" name="Proc. Natl. Acad. Sci. U.S.A.">
        <title>Roles of Arabidopsis ATP/ADP isopentenyltransferases and tRNA isopentenyltransferases in cytokinin biosynthesis.</title>
        <authorList>
            <person name="Miyawaki K."/>
            <person name="Tarkowski P."/>
            <person name="Matsumoto-Kitano M."/>
            <person name="Kato T."/>
            <person name="Sato S."/>
            <person name="Tarkowska D."/>
            <person name="Tabata S."/>
            <person name="Sandberg G."/>
            <person name="Kakimoto T."/>
        </authorList>
    </citation>
    <scope>FUNCTION</scope>
    <scope>DISRUPTION PHENOTYPE</scope>
</reference>
<feature type="transit peptide" description="Chloroplast" evidence="1">
    <location>
        <begin position="1"/>
        <end position="71"/>
    </location>
</feature>
<feature type="chain" id="PRO_0000391070" description="Adenylate isopentenyltransferase 1, chloroplastic">
    <location>
        <begin position="72"/>
        <end position="357"/>
    </location>
</feature>
<feature type="region of interest" description="Disordered" evidence="2">
    <location>
        <begin position="20"/>
        <end position="58"/>
    </location>
</feature>
<feature type="compositionally biased region" description="Low complexity" evidence="2">
    <location>
        <begin position="20"/>
        <end position="39"/>
    </location>
</feature>
<feature type="binding site" evidence="1">
    <location>
        <begin position="72"/>
        <end position="79"/>
    </location>
    <ligand>
        <name>ATP</name>
        <dbReference type="ChEBI" id="CHEBI:30616"/>
    </ligand>
</feature>
<feature type="sequence conflict" description="In Ref. 1; BAB59029." evidence="9" ref="1">
    <original>N</original>
    <variation>I</variation>
    <location>
        <position position="337"/>
    </location>
</feature>
<sequence length="357" mass="40765">MTELNFHLLPIISDRFTTTTTTSPSFSSHSSSSSSLLSFTKRRRKHQPLVSSIRMEQSRSRNRKDKVVVILGATGAGKSRLSVDLATRFPSEIINSDKIQVYEGLEITTNQITLQDRRGVPHHLLGVINPEHGELTAGEFRSAASNVVKEITSRQKVPIIAGGSNSFVHALLAQRFDPKFDPFSSGSCLISSDLRYECCFIWVDVSETVLYEYLLRRVDEMMDSGMFEELSRFYDPVKSGLETRFGIRKAIGVPEFDGYFKEYPPEKKMIKWDALRKAAYDKAVDDIKRNTWTLAKRQVKKIEMLKDAGWEIERVDATASFKAVMMKSSSEKKWRENWEEQVLEPSVKIVKRHLVQN</sequence>
<proteinExistence type="evidence at protein level"/>
<gene>
    <name type="primary">IPT1</name>
    <name type="ordered locus">At1g68460</name>
    <name type="ORF">T26J14.3</name>
</gene>
<name>IPT1_ARATH</name>
<protein>
    <recommendedName>
        <fullName>Adenylate isopentenyltransferase 1, chloroplastic</fullName>
        <shortName>AtIPT1</shortName>
        <ecNumber evidence="3 7">2.5.1.112</ecNumber>
        <ecNumber evidence="7">2.5.1.27</ecNumber>
    </recommendedName>
    <alternativeName>
        <fullName>Adenylate dimethylallyltransferase 1</fullName>
    </alternativeName>
    <alternativeName>
        <fullName>Cytokinin synthase 1</fullName>
    </alternativeName>
</protein>
<dbReference type="EC" id="2.5.1.112" evidence="3 7"/>
<dbReference type="EC" id="2.5.1.27" evidence="7"/>
<dbReference type="EMBL" id="AB061400">
    <property type="protein sequence ID" value="BAB59029.1"/>
    <property type="molecule type" value="mRNA"/>
</dbReference>
<dbReference type="EMBL" id="AB062607">
    <property type="protein sequence ID" value="BAB59040.1"/>
    <property type="molecule type" value="mRNA"/>
</dbReference>
<dbReference type="EMBL" id="AC011915">
    <property type="protein sequence ID" value="AAG52395.1"/>
    <property type="molecule type" value="Genomic_DNA"/>
</dbReference>
<dbReference type="EMBL" id="CP002684">
    <property type="protein sequence ID" value="AEE34796.1"/>
    <property type="molecule type" value="Genomic_DNA"/>
</dbReference>
<dbReference type="PIR" id="F96708">
    <property type="entry name" value="F96708"/>
</dbReference>
<dbReference type="RefSeq" id="NP_177013.1">
    <property type="nucleotide sequence ID" value="NM_105517.2"/>
</dbReference>
<dbReference type="SMR" id="Q94ID3"/>
<dbReference type="STRING" id="3702.Q94ID3"/>
<dbReference type="PaxDb" id="3702-AT1G68460.1"/>
<dbReference type="ProteomicsDB" id="248484"/>
<dbReference type="EnsemblPlants" id="AT1G68460.1">
    <property type="protein sequence ID" value="AT1G68460.1"/>
    <property type="gene ID" value="AT1G68460"/>
</dbReference>
<dbReference type="GeneID" id="843175"/>
<dbReference type="Gramene" id="AT1G68460.1">
    <property type="protein sequence ID" value="AT1G68460.1"/>
    <property type="gene ID" value="AT1G68460"/>
</dbReference>
<dbReference type="KEGG" id="ath:AT1G68460"/>
<dbReference type="Araport" id="AT1G68460"/>
<dbReference type="TAIR" id="AT1G68460">
    <property type="gene designation" value="IPT1"/>
</dbReference>
<dbReference type="eggNOG" id="KOG1384">
    <property type="taxonomic scope" value="Eukaryota"/>
</dbReference>
<dbReference type="HOGENOM" id="CLU_032616_4_2_1"/>
<dbReference type="InParanoid" id="Q94ID3"/>
<dbReference type="OMA" id="CDYLCKR"/>
<dbReference type="PhylomeDB" id="Q94ID3"/>
<dbReference type="BioCyc" id="ARA:AT1G68460-MONOMER"/>
<dbReference type="BioCyc" id="MetaCyc:AT1G68460-MONOMER"/>
<dbReference type="BRENDA" id="2.5.1.112">
    <property type="organism ID" value="399"/>
</dbReference>
<dbReference type="BRENDA" id="2.5.1.27">
    <property type="organism ID" value="399"/>
</dbReference>
<dbReference type="SABIO-RK" id="Q94ID3"/>
<dbReference type="PRO" id="PR:Q94ID3"/>
<dbReference type="Proteomes" id="UP000006548">
    <property type="component" value="Chromosome 1"/>
</dbReference>
<dbReference type="ExpressionAtlas" id="Q94ID3">
    <property type="expression patterns" value="baseline and differential"/>
</dbReference>
<dbReference type="GO" id="GO:0009507">
    <property type="term" value="C:chloroplast"/>
    <property type="evidence" value="ECO:0007669"/>
    <property type="project" value="UniProtKB-SubCell"/>
</dbReference>
<dbReference type="GO" id="GO:0009536">
    <property type="term" value="C:plastid"/>
    <property type="evidence" value="ECO:0000314"/>
    <property type="project" value="UniProtKB"/>
</dbReference>
<dbReference type="GO" id="GO:0009824">
    <property type="term" value="F:AMP dimethylallyltransferase activity"/>
    <property type="evidence" value="ECO:0000314"/>
    <property type="project" value="TAIR"/>
</dbReference>
<dbReference type="GO" id="GO:0005524">
    <property type="term" value="F:ATP binding"/>
    <property type="evidence" value="ECO:0007669"/>
    <property type="project" value="UniProtKB-KW"/>
</dbReference>
<dbReference type="GO" id="GO:0052622">
    <property type="term" value="F:ATP/ADP dimethylallyltransferase activity"/>
    <property type="evidence" value="ECO:0000314"/>
    <property type="project" value="TAIR"/>
</dbReference>
<dbReference type="GO" id="GO:0009691">
    <property type="term" value="P:cytokinin biosynthetic process"/>
    <property type="evidence" value="ECO:0000304"/>
    <property type="project" value="TAIR"/>
</dbReference>
<dbReference type="GO" id="GO:0080117">
    <property type="term" value="P:secondary growth"/>
    <property type="evidence" value="ECO:0000316"/>
    <property type="project" value="TAIR"/>
</dbReference>
<dbReference type="FunFam" id="1.10.287.890:FF:000003">
    <property type="entry name" value="Adenylate isopentenyltransferase"/>
    <property type="match status" value="1"/>
</dbReference>
<dbReference type="Gene3D" id="1.10.287.890">
    <property type="entry name" value="Crystal structure of tRNA isopentenylpyrophosphate transferase (bh2366) domain"/>
    <property type="match status" value="1"/>
</dbReference>
<dbReference type="Gene3D" id="3.40.50.300">
    <property type="entry name" value="P-loop containing nucleotide triphosphate hydrolases"/>
    <property type="match status" value="1"/>
</dbReference>
<dbReference type="InterPro" id="IPR039657">
    <property type="entry name" value="Dimethylallyltransferase"/>
</dbReference>
<dbReference type="InterPro" id="IPR027417">
    <property type="entry name" value="P-loop_NTPase"/>
</dbReference>
<dbReference type="PANTHER" id="PTHR11088:SF75">
    <property type="entry name" value="ADENYLATE ISOPENTENYLTRANSFERASE 1, CHLOROPLASTIC"/>
    <property type="match status" value="1"/>
</dbReference>
<dbReference type="PANTHER" id="PTHR11088">
    <property type="entry name" value="TRNA DIMETHYLALLYLTRANSFERASE"/>
    <property type="match status" value="1"/>
</dbReference>
<dbReference type="Pfam" id="PF01715">
    <property type="entry name" value="IPPT"/>
    <property type="match status" value="2"/>
</dbReference>
<dbReference type="SUPFAM" id="SSF52540">
    <property type="entry name" value="P-loop containing nucleoside triphosphate hydrolases"/>
    <property type="match status" value="1"/>
</dbReference>
<evidence type="ECO:0000255" key="1"/>
<evidence type="ECO:0000256" key="2">
    <source>
        <dbReference type="SAM" id="MobiDB-lite"/>
    </source>
</evidence>
<evidence type="ECO:0000269" key="3">
    <source>
    </source>
</evidence>
<evidence type="ECO:0000269" key="4">
    <source>
    </source>
</evidence>
<evidence type="ECO:0000269" key="5">
    <source>
    </source>
</evidence>
<evidence type="ECO:0000269" key="6">
    <source>
    </source>
</evidence>
<evidence type="ECO:0000269" key="7">
    <source>
    </source>
</evidence>
<evidence type="ECO:0000269" key="8">
    <source>
    </source>
</evidence>
<evidence type="ECO:0000305" key="9"/>
<organism>
    <name type="scientific">Arabidopsis thaliana</name>
    <name type="common">Mouse-ear cress</name>
    <dbReference type="NCBI Taxonomy" id="3702"/>
    <lineage>
        <taxon>Eukaryota</taxon>
        <taxon>Viridiplantae</taxon>
        <taxon>Streptophyta</taxon>
        <taxon>Embryophyta</taxon>
        <taxon>Tracheophyta</taxon>
        <taxon>Spermatophyta</taxon>
        <taxon>Magnoliopsida</taxon>
        <taxon>eudicotyledons</taxon>
        <taxon>Gunneridae</taxon>
        <taxon>Pentapetalae</taxon>
        <taxon>rosids</taxon>
        <taxon>malvids</taxon>
        <taxon>Brassicales</taxon>
        <taxon>Brassicaceae</taxon>
        <taxon>Camelineae</taxon>
        <taxon>Arabidopsis</taxon>
    </lineage>
</organism>
<comment type="function">
    <text evidence="8">Involved in cytokinin biosynthesis. Catalyzes the transfer of an isopentenyl group from dimethylallyl diphosphate (DMAPP) to ATP, ADP and AMP. Adenine, adenosine, isopentenylpyrophosphate and 1-hydroxy-2-methyl-2-(E)-butenyl 4-diphosphate (HMBDP) are not used as substrates.</text>
</comment>
<comment type="catalytic activity">
    <reaction evidence="7">
        <text>dimethylallyl diphosphate + AMP = N(6)-(dimethylallyl)adenosine 5'-phosphate + diphosphate</text>
        <dbReference type="Rhea" id="RHEA:15285"/>
        <dbReference type="ChEBI" id="CHEBI:33019"/>
        <dbReference type="ChEBI" id="CHEBI:57526"/>
        <dbReference type="ChEBI" id="CHEBI:57623"/>
        <dbReference type="ChEBI" id="CHEBI:456215"/>
        <dbReference type="EC" id="2.5.1.27"/>
    </reaction>
</comment>
<comment type="catalytic activity">
    <reaction evidence="3 7">
        <text>dimethylallyl diphosphate + ADP = N(6)-(dimethylallyl)adenosine 5'-diphosphate + diphosphate</text>
        <dbReference type="Rhea" id="RHEA:36327"/>
        <dbReference type="ChEBI" id="CHEBI:33019"/>
        <dbReference type="ChEBI" id="CHEBI:57623"/>
        <dbReference type="ChEBI" id="CHEBI:73533"/>
        <dbReference type="ChEBI" id="CHEBI:456216"/>
        <dbReference type="EC" id="2.5.1.112"/>
    </reaction>
</comment>
<comment type="catalytic activity">
    <reaction evidence="3 7">
        <text>dimethylallyl diphosphate + ATP = N(6)-(dimethylallyl)adenosine 5'-triphosphate + diphosphate</text>
        <dbReference type="Rhea" id="RHEA:36331"/>
        <dbReference type="ChEBI" id="CHEBI:30616"/>
        <dbReference type="ChEBI" id="CHEBI:33019"/>
        <dbReference type="ChEBI" id="CHEBI:57623"/>
        <dbReference type="ChEBI" id="CHEBI:73532"/>
        <dbReference type="EC" id="2.5.1.112"/>
    </reaction>
</comment>
<comment type="biophysicochemical properties">
    <kinetics>
        <KM evidence="3 7">185 uM for ATP</KM>
        <KM evidence="3 7">50 uM for DMAPP</KM>
    </kinetics>
    <phDependence>
        <text evidence="3 7">Optimum pH is 8.0. No activity at pH 6.0.</text>
    </phDependence>
</comment>
<comment type="subcellular location">
    <subcellularLocation>
        <location evidence="5">Plastid</location>
        <location evidence="5">Chloroplast</location>
    </subcellularLocation>
</comment>
<comment type="tissue specificity">
    <text evidence="4 6">Expressed in the vascular stele of the roots, in the xylem precursor cell files in the root tip, in leaf axils, ovules, and immature seeds.</text>
</comment>
<comment type="induction">
    <text evidence="4">Down-regulated by cytokinins.</text>
</comment>
<comment type="disruption phenotype">
    <text evidence="8">No visible phenotype, due the redundancy with other IPTs.</text>
</comment>
<comment type="similarity">
    <text evidence="9">Belongs to the IPP transferase family.</text>
</comment>
<accession>Q94ID3</accession>
<accession>Q9CA35</accession>
<keyword id="KW-0067">ATP-binding</keyword>
<keyword id="KW-0150">Chloroplast</keyword>
<keyword id="KW-0203">Cytokinin biosynthesis</keyword>
<keyword id="KW-0547">Nucleotide-binding</keyword>
<keyword id="KW-0934">Plastid</keyword>
<keyword id="KW-1185">Reference proteome</keyword>
<keyword id="KW-0808">Transferase</keyword>
<keyword id="KW-0809">Transit peptide</keyword>